<gene>
    <name evidence="1" type="primary">matK</name>
</gene>
<proteinExistence type="inferred from homology"/>
<dbReference type="EMBL" id="AF169289">
    <property type="protein sequence ID" value="AAD50445.1"/>
    <property type="molecule type" value="Genomic_DNA"/>
</dbReference>
<dbReference type="EMBL" id="AF522108">
    <property type="protein sequence ID" value="AAM82100.1"/>
    <property type="molecule type" value="Genomic_DNA"/>
</dbReference>
<dbReference type="GO" id="GO:0009507">
    <property type="term" value="C:chloroplast"/>
    <property type="evidence" value="ECO:0007669"/>
    <property type="project" value="UniProtKB-SubCell"/>
</dbReference>
<dbReference type="GO" id="GO:0003723">
    <property type="term" value="F:RNA binding"/>
    <property type="evidence" value="ECO:0007669"/>
    <property type="project" value="UniProtKB-KW"/>
</dbReference>
<dbReference type="GO" id="GO:0006397">
    <property type="term" value="P:mRNA processing"/>
    <property type="evidence" value="ECO:0007669"/>
    <property type="project" value="UniProtKB-KW"/>
</dbReference>
<dbReference type="GO" id="GO:0008380">
    <property type="term" value="P:RNA splicing"/>
    <property type="evidence" value="ECO:0007669"/>
    <property type="project" value="UniProtKB-UniRule"/>
</dbReference>
<dbReference type="GO" id="GO:0008033">
    <property type="term" value="P:tRNA processing"/>
    <property type="evidence" value="ECO:0007669"/>
    <property type="project" value="UniProtKB-KW"/>
</dbReference>
<dbReference type="HAMAP" id="MF_01390">
    <property type="entry name" value="MatK"/>
    <property type="match status" value="1"/>
</dbReference>
<dbReference type="InterPro" id="IPR024937">
    <property type="entry name" value="Domain_X"/>
</dbReference>
<dbReference type="InterPro" id="IPR002866">
    <property type="entry name" value="Maturase_MatK"/>
</dbReference>
<dbReference type="InterPro" id="IPR024942">
    <property type="entry name" value="Maturase_MatK_N"/>
</dbReference>
<dbReference type="PANTHER" id="PTHR34811">
    <property type="entry name" value="MATURASE K"/>
    <property type="match status" value="1"/>
</dbReference>
<dbReference type="PANTHER" id="PTHR34811:SF1">
    <property type="entry name" value="MATURASE K"/>
    <property type="match status" value="1"/>
</dbReference>
<dbReference type="Pfam" id="PF01348">
    <property type="entry name" value="Intron_maturas2"/>
    <property type="match status" value="1"/>
</dbReference>
<dbReference type="Pfam" id="PF01824">
    <property type="entry name" value="MatK_N"/>
    <property type="match status" value="1"/>
</dbReference>
<name>MATK_MEDSA</name>
<feature type="chain" id="PRO_0000143511" description="Maturase K">
    <location>
        <begin position="1"/>
        <end position="506"/>
    </location>
</feature>
<feature type="sequence conflict" description="In Ref. 1; AAD50445." evidence="2" ref="1">
    <original>KSS</original>
    <variation>LSC</variation>
    <location>
        <begin position="110"/>
        <end position="112"/>
    </location>
</feature>
<feature type="sequence conflict" description="In Ref. 1; AAD50445." evidence="2" ref="1">
    <original>T</original>
    <variation>I</variation>
    <location>
        <position position="199"/>
    </location>
</feature>
<feature type="sequence conflict" description="In Ref. 1; AAD50445." evidence="2" ref="1">
    <original>T</original>
    <variation>R</variation>
    <location>
        <position position="267"/>
    </location>
</feature>
<feature type="sequence conflict" description="In Ref. 1; AAD50445." evidence="2" ref="1">
    <original>H</original>
    <variation>N</variation>
    <location>
        <position position="319"/>
    </location>
</feature>
<feature type="sequence conflict" description="In Ref. 1; AAD50445." evidence="2" ref="1">
    <original>PL</original>
    <variation>HP</variation>
    <location>
        <begin position="386"/>
        <end position="387"/>
    </location>
</feature>
<evidence type="ECO:0000255" key="1">
    <source>
        <dbReference type="HAMAP-Rule" id="MF_01390"/>
    </source>
</evidence>
<evidence type="ECO:0000305" key="2"/>
<reference key="1">
    <citation type="online journal article" date="1999" name="Plant Gene Register">
        <title>Alfalfa plastid sequences encoding tRNA-Lys (trnK-UUU) and maturase K genes.</title>
        <authorList>
            <person name="Nugent G.D."/>
            <person name="Stalker D.M."/>
            <person name="Stevenson T.W."/>
        </authorList>
        <locator>PGR99-148</locator>
    </citation>
    <scope>NUCLEOTIDE SEQUENCE [GENOMIC DNA]</scope>
</reference>
<reference key="2">
    <citation type="book" date="2003" name="Advances in legume systematics - part 10">
        <title>Phylogenetic analyses of tribes Trifolieae and Vicieae based on sequences of the plastid gene matK (Papilionoideae: Leguminosae).</title>
        <editorList>
            <person name="Klitgaard B.B."/>
            <person name="Bruneau A."/>
        </editorList>
        <authorList>
            <person name="Steele K.P."/>
            <person name="Wojciechowski M.F."/>
        </authorList>
    </citation>
    <scope>NUCLEOTIDE SEQUENCE [GENOMIC DNA]</scope>
</reference>
<geneLocation type="chloroplast"/>
<protein>
    <recommendedName>
        <fullName evidence="1">Maturase K</fullName>
    </recommendedName>
    <alternativeName>
        <fullName evidence="1">Intron maturase</fullName>
    </alternativeName>
</protein>
<organism>
    <name type="scientific">Medicago sativa</name>
    <name type="common">Alfalfa</name>
    <dbReference type="NCBI Taxonomy" id="3879"/>
    <lineage>
        <taxon>Eukaryota</taxon>
        <taxon>Viridiplantae</taxon>
        <taxon>Streptophyta</taxon>
        <taxon>Embryophyta</taxon>
        <taxon>Tracheophyta</taxon>
        <taxon>Spermatophyta</taxon>
        <taxon>Magnoliopsida</taxon>
        <taxon>eudicotyledons</taxon>
        <taxon>Gunneridae</taxon>
        <taxon>Pentapetalae</taxon>
        <taxon>rosids</taxon>
        <taxon>fabids</taxon>
        <taxon>Fabales</taxon>
        <taxon>Fabaceae</taxon>
        <taxon>Papilionoideae</taxon>
        <taxon>50 kb inversion clade</taxon>
        <taxon>NPAAA clade</taxon>
        <taxon>Hologalegina</taxon>
        <taxon>IRL clade</taxon>
        <taxon>Trifolieae</taxon>
        <taxon>Medicago</taxon>
    </lineage>
</organism>
<keyword id="KW-0150">Chloroplast</keyword>
<keyword id="KW-0507">mRNA processing</keyword>
<keyword id="KW-0934">Plastid</keyword>
<keyword id="KW-0694">RNA-binding</keyword>
<keyword id="KW-0819">tRNA processing</keyword>
<sequence>MKEYQVYLERARSRQQDFLYPLIFREYIYGLAYSHNFNRSIFVENVGSDSKYSLLIVKRLITRMYQQNHLIISANDSNKNPFWGYNKNFYSQIISEGFAIVVEIPFFLEKSSSLEEAEIIKSYKNLRSIHSIFPFLEDKFTYLNYVSDIRIPYPIHLEILVQILRYWVKDAPFFHLLRLFLYNFSNWNSFITTKNSISTFSKSNPRLFLFLYNFYVCEYESIFLFLRNKSSHLRLKSFSVFFERIFFYAKREHLVEVFAKDFSYTLTFFKDPLIHYVRYQGKCILASKNSPFLMNKWKHYFIHLWQGFFYVWSQPRTIHINQLSEHSFQLLGYFLNVRVNRSVVRSQMLQNTFLIEIFSKKLDIIVPIIPLIRSLAKAKFCNVLGPLISKPVWADSSDFDIIDRFLXICRNLSHYYNGSSKKKSLYRIKYILRLSCIKTLACKHKSTVRAFLKRSGSEELLEEFFTEEEEILSLIFPRDSSTLHRLNRNRIWYLDILFSNDLVNDE</sequence>
<accession>Q9TKI5</accession>
<accession>Q8MCP7</accession>
<comment type="function">
    <text evidence="1">Usually encoded in the trnK tRNA gene intron. Probably assists in splicing its own and other chloroplast group II introns.</text>
</comment>
<comment type="subcellular location">
    <subcellularLocation>
        <location>Plastid</location>
        <location>Chloroplast</location>
    </subcellularLocation>
</comment>
<comment type="similarity">
    <text evidence="1">Belongs to the intron maturase 2 family. MatK subfamily.</text>
</comment>